<protein>
    <recommendedName>
        <fullName evidence="1">Chaperone protein DnaK</fullName>
    </recommendedName>
    <alternativeName>
        <fullName evidence="1">HSP70</fullName>
    </alternativeName>
    <alternativeName>
        <fullName evidence="1">Heat shock 70 kDa protein</fullName>
    </alternativeName>
    <alternativeName>
        <fullName evidence="1">Heat shock protein 70</fullName>
    </alternativeName>
</protein>
<keyword id="KW-0067">ATP-binding</keyword>
<keyword id="KW-0143">Chaperone</keyword>
<keyword id="KW-0547">Nucleotide-binding</keyword>
<keyword id="KW-0597">Phosphoprotein</keyword>
<keyword id="KW-0346">Stress response</keyword>
<feature type="chain" id="PRO_0000225929" description="Chaperone protein DnaK">
    <location>
        <begin position="1"/>
        <end position="645"/>
    </location>
</feature>
<feature type="region of interest" description="Disordered" evidence="2">
    <location>
        <begin position="603"/>
        <end position="645"/>
    </location>
</feature>
<feature type="compositionally biased region" description="Low complexity" evidence="2">
    <location>
        <begin position="609"/>
        <end position="623"/>
    </location>
</feature>
<feature type="compositionally biased region" description="Basic and acidic residues" evidence="2">
    <location>
        <begin position="625"/>
        <end position="645"/>
    </location>
</feature>
<feature type="modified residue" description="Phosphothreonine; by autocatalysis" evidence="1">
    <location>
        <position position="200"/>
    </location>
</feature>
<comment type="function">
    <text evidence="1">Acts as a chaperone.</text>
</comment>
<comment type="induction">
    <text evidence="1">By stress conditions e.g. heat shock.</text>
</comment>
<comment type="similarity">
    <text evidence="1">Belongs to the heat shock protein 70 family.</text>
</comment>
<accession>Q5PAB8</accession>
<name>DNAK_ANAMM</name>
<evidence type="ECO:0000255" key="1">
    <source>
        <dbReference type="HAMAP-Rule" id="MF_00332"/>
    </source>
</evidence>
<evidence type="ECO:0000256" key="2">
    <source>
        <dbReference type="SAM" id="MobiDB-lite"/>
    </source>
</evidence>
<reference key="1">
    <citation type="journal article" date="2005" name="Proc. Natl. Acad. Sci. U.S.A.">
        <title>Complete genome sequencing of Anaplasma marginale reveals that the surface is skewed to two superfamilies of outer membrane proteins.</title>
        <authorList>
            <person name="Brayton K.A."/>
            <person name="Kappmeyer L.S."/>
            <person name="Herndon D.R."/>
            <person name="Dark M.J."/>
            <person name="Tibbals D.L."/>
            <person name="Palmer G.H."/>
            <person name="McGuire T.C."/>
            <person name="Knowles D.P. Jr."/>
        </authorList>
    </citation>
    <scope>NUCLEOTIDE SEQUENCE [LARGE SCALE GENOMIC DNA]</scope>
    <source>
        <strain>St. Maries</strain>
    </source>
</reference>
<proteinExistence type="inferred from homology"/>
<organism>
    <name type="scientific">Anaplasma marginale (strain St. Maries)</name>
    <dbReference type="NCBI Taxonomy" id="234826"/>
    <lineage>
        <taxon>Bacteria</taxon>
        <taxon>Pseudomonadati</taxon>
        <taxon>Pseudomonadota</taxon>
        <taxon>Alphaproteobacteria</taxon>
        <taxon>Rickettsiales</taxon>
        <taxon>Anaplasmataceae</taxon>
        <taxon>Anaplasma</taxon>
    </lineage>
</organism>
<dbReference type="EMBL" id="CP000030">
    <property type="protein sequence ID" value="AAV86762.1"/>
    <property type="molecule type" value="Genomic_DNA"/>
</dbReference>
<dbReference type="SMR" id="Q5PAB8"/>
<dbReference type="KEGG" id="ama:AM842"/>
<dbReference type="HOGENOM" id="CLU_005965_2_1_5"/>
<dbReference type="GO" id="GO:0005524">
    <property type="term" value="F:ATP binding"/>
    <property type="evidence" value="ECO:0007669"/>
    <property type="project" value="UniProtKB-UniRule"/>
</dbReference>
<dbReference type="GO" id="GO:0140662">
    <property type="term" value="F:ATP-dependent protein folding chaperone"/>
    <property type="evidence" value="ECO:0007669"/>
    <property type="project" value="InterPro"/>
</dbReference>
<dbReference type="GO" id="GO:0051082">
    <property type="term" value="F:unfolded protein binding"/>
    <property type="evidence" value="ECO:0007669"/>
    <property type="project" value="InterPro"/>
</dbReference>
<dbReference type="FunFam" id="2.60.34.10:FF:000014">
    <property type="entry name" value="Chaperone protein DnaK HSP70"/>
    <property type="match status" value="1"/>
</dbReference>
<dbReference type="FunFam" id="3.30.420.40:FF:000020">
    <property type="entry name" value="Chaperone protein HscA homolog"/>
    <property type="match status" value="1"/>
</dbReference>
<dbReference type="FunFam" id="1.20.1270.10:FF:000001">
    <property type="entry name" value="Molecular chaperone DnaK"/>
    <property type="match status" value="1"/>
</dbReference>
<dbReference type="FunFam" id="3.30.420.40:FF:000004">
    <property type="entry name" value="Molecular chaperone DnaK"/>
    <property type="match status" value="1"/>
</dbReference>
<dbReference type="FunFam" id="3.90.640.10:FF:000003">
    <property type="entry name" value="Molecular chaperone DnaK"/>
    <property type="match status" value="1"/>
</dbReference>
<dbReference type="Gene3D" id="1.20.1270.10">
    <property type="match status" value="1"/>
</dbReference>
<dbReference type="Gene3D" id="3.30.420.40">
    <property type="match status" value="2"/>
</dbReference>
<dbReference type="Gene3D" id="3.90.640.10">
    <property type="entry name" value="Actin, Chain A, domain 4"/>
    <property type="match status" value="1"/>
</dbReference>
<dbReference type="Gene3D" id="2.60.34.10">
    <property type="entry name" value="Substrate Binding Domain Of DNAk, Chain A, domain 1"/>
    <property type="match status" value="1"/>
</dbReference>
<dbReference type="HAMAP" id="MF_00332">
    <property type="entry name" value="DnaK"/>
    <property type="match status" value="1"/>
</dbReference>
<dbReference type="InterPro" id="IPR043129">
    <property type="entry name" value="ATPase_NBD"/>
</dbReference>
<dbReference type="InterPro" id="IPR012725">
    <property type="entry name" value="Chaperone_DnaK"/>
</dbReference>
<dbReference type="InterPro" id="IPR018181">
    <property type="entry name" value="Heat_shock_70_CS"/>
</dbReference>
<dbReference type="InterPro" id="IPR029048">
    <property type="entry name" value="HSP70_C_sf"/>
</dbReference>
<dbReference type="InterPro" id="IPR029047">
    <property type="entry name" value="HSP70_peptide-bd_sf"/>
</dbReference>
<dbReference type="InterPro" id="IPR013126">
    <property type="entry name" value="Hsp_70_fam"/>
</dbReference>
<dbReference type="NCBIfam" id="NF001413">
    <property type="entry name" value="PRK00290.1"/>
    <property type="match status" value="1"/>
</dbReference>
<dbReference type="NCBIfam" id="NF003520">
    <property type="entry name" value="PRK05183.1"/>
    <property type="match status" value="1"/>
</dbReference>
<dbReference type="NCBIfam" id="TIGR02350">
    <property type="entry name" value="prok_dnaK"/>
    <property type="match status" value="1"/>
</dbReference>
<dbReference type="PANTHER" id="PTHR19375">
    <property type="entry name" value="HEAT SHOCK PROTEIN 70KDA"/>
    <property type="match status" value="1"/>
</dbReference>
<dbReference type="Pfam" id="PF00012">
    <property type="entry name" value="HSP70"/>
    <property type="match status" value="1"/>
</dbReference>
<dbReference type="PRINTS" id="PR00301">
    <property type="entry name" value="HEATSHOCK70"/>
</dbReference>
<dbReference type="SUPFAM" id="SSF53067">
    <property type="entry name" value="Actin-like ATPase domain"/>
    <property type="match status" value="2"/>
</dbReference>
<dbReference type="SUPFAM" id="SSF100934">
    <property type="entry name" value="Heat shock protein 70kD (HSP70), C-terminal subdomain"/>
    <property type="match status" value="1"/>
</dbReference>
<dbReference type="SUPFAM" id="SSF100920">
    <property type="entry name" value="Heat shock protein 70kD (HSP70), peptide-binding domain"/>
    <property type="match status" value="1"/>
</dbReference>
<dbReference type="PROSITE" id="PS00297">
    <property type="entry name" value="HSP70_1"/>
    <property type="match status" value="1"/>
</dbReference>
<dbReference type="PROSITE" id="PS00329">
    <property type="entry name" value="HSP70_2"/>
    <property type="match status" value="1"/>
</dbReference>
<dbReference type="PROSITE" id="PS01036">
    <property type="entry name" value="HSP70_3"/>
    <property type="match status" value="1"/>
</dbReference>
<gene>
    <name evidence="1" type="primary">dnaK</name>
    <name type="ordered locus">AM842</name>
</gene>
<sequence>MGVIMAAERIIGIDLGTTNSCVAVMEAGTAKVIENSEGSRTTPSVVAFTENERLVGELAKRQANINAQNTIYASKRIIGRRYDDMRDVKCPYEVFPAKNGDAWIRARGEGYSPVQIGAFVLEKIKETAERYFGAPVKKAVITVPAYFNDAQRQATKDAGTIAGLDVVRIINEPTAAALAYGLDKGDKQRTIVVYDLGGGTFDVSVLEIAEGVFEVKATNGDTKLGGEDFDNAVMEHMMESFKQETGIDLHNDPMAVQRIKEAAEKAKIELSSRLETDITLPFISSDSTGAKHLSLKLTRAKFEGLVSELIERTIEPCKKALDDAGIKDTSKIDEVVLVGGMTRMPKVIQRVKDFFGGKEPCKGVNPDEVVAIGAAIQGGILTGDVRDVLLLDVAPLSLGIETLGGVFTPLIERNTTIPTKKSQVFSTAEDGQTAVTIKVYQGERKMAVDNKLLGQFSLEGIPSAPRGIPQIEVTFDIDANGIVHVSAKDKASGKEQTIKIQSSGGLSEEEIKKMVQDAQDRAEEDEKRKKRVELKNSAEALIHSTEKSLNDYGDKISSADKSGIEAAIKELRECLSNDDSSSDVIQQKYDALMQLSMKLGEAAYSAQKDSGTSTDSTASDTSGNPEERVVDSEYQEIKKDDEDKK</sequence>